<organismHost>
    <name type="scientific">Glycine max</name>
    <name type="common">Soybean</name>
    <name type="synonym">Glycine hispida</name>
    <dbReference type="NCBI Taxonomy" id="3847"/>
</organismHost>
<organismHost>
    <name type="scientific">Vigna mungo</name>
    <name type="common">Black gram</name>
    <name type="synonym">Phaseolus mungo</name>
    <dbReference type="NCBI Taxonomy" id="3915"/>
</organismHost>
<organismHost>
    <name type="scientific">Vigna radiata</name>
    <name type="common">Mung bean</name>
    <dbReference type="NCBI Taxonomy" id="157791"/>
</organismHost>
<organismHost>
    <name type="scientific">Vigna radiata var. radiata</name>
    <name type="common">Mung bean</name>
    <name type="synonym">Phaseolus aureus</name>
    <dbReference type="NCBI Taxonomy" id="3916"/>
</organismHost>
<organismHost>
    <name type="scientific">Vigna unguiculata</name>
    <name type="common">Cowpea</name>
    <dbReference type="NCBI Taxonomy" id="3917"/>
</organismHost>
<dbReference type="EMBL" id="AJ132575">
    <property type="protein sequence ID" value="CAA10704.1"/>
    <property type="molecule type" value="Genomic_DNA"/>
</dbReference>
<dbReference type="SMR" id="Q9YPS5"/>
<dbReference type="Proteomes" id="UP000007784">
    <property type="component" value="Genome"/>
</dbReference>
<dbReference type="GO" id="GO:0043657">
    <property type="term" value="C:host cell"/>
    <property type="evidence" value="ECO:0007669"/>
    <property type="project" value="GOC"/>
</dbReference>
<dbReference type="GO" id="GO:0042025">
    <property type="term" value="C:host cell nucleus"/>
    <property type="evidence" value="ECO:0007669"/>
    <property type="project" value="UniProtKB-SubCell"/>
</dbReference>
<dbReference type="GO" id="GO:0039615">
    <property type="term" value="C:T=1 icosahedral viral capsid"/>
    <property type="evidence" value="ECO:0007669"/>
    <property type="project" value="UniProtKB-KW"/>
</dbReference>
<dbReference type="GO" id="GO:0003677">
    <property type="term" value="F:DNA binding"/>
    <property type="evidence" value="ECO:0007669"/>
    <property type="project" value="UniProtKB-KW"/>
</dbReference>
<dbReference type="GO" id="GO:0005198">
    <property type="term" value="F:structural molecule activity"/>
    <property type="evidence" value="ECO:0007669"/>
    <property type="project" value="InterPro"/>
</dbReference>
<dbReference type="GO" id="GO:0008270">
    <property type="term" value="F:zinc ion binding"/>
    <property type="evidence" value="ECO:0007669"/>
    <property type="project" value="UniProtKB-KW"/>
</dbReference>
<dbReference type="GO" id="GO:0046718">
    <property type="term" value="P:symbiont entry into host cell"/>
    <property type="evidence" value="ECO:0007669"/>
    <property type="project" value="UniProtKB-KW"/>
</dbReference>
<dbReference type="GO" id="GO:0075732">
    <property type="term" value="P:viral penetration into host nucleus"/>
    <property type="evidence" value="ECO:0007669"/>
    <property type="project" value="UniProtKB-KW"/>
</dbReference>
<dbReference type="Gene3D" id="2.60.120.20">
    <property type="match status" value="1"/>
</dbReference>
<dbReference type="InterPro" id="IPR000650">
    <property type="entry name" value="Gem_coat_AR1"/>
</dbReference>
<dbReference type="InterPro" id="IPR000263">
    <property type="entry name" value="GV_A/BR1_coat"/>
</dbReference>
<dbReference type="InterPro" id="IPR029053">
    <property type="entry name" value="Viral_coat"/>
</dbReference>
<dbReference type="Pfam" id="PF00844">
    <property type="entry name" value="Gemini_coat"/>
    <property type="match status" value="1"/>
</dbReference>
<dbReference type="PRINTS" id="PR00224">
    <property type="entry name" value="GEMCOATAR1"/>
</dbReference>
<dbReference type="PRINTS" id="PR00223">
    <property type="entry name" value="GEMCOATARBR1"/>
</dbReference>
<proteinExistence type="evidence at protein level"/>
<protein>
    <recommendedName>
        <fullName>Capsid protein</fullName>
    </recommendedName>
    <alternativeName>
        <fullName>Coat protein</fullName>
        <shortName>CP</shortName>
    </alternativeName>
</protein>
<accession>Q9YPS5</accession>
<keyword id="KW-0167">Capsid protein</keyword>
<keyword id="KW-0238">DNA-binding</keyword>
<keyword id="KW-1048">Host nucleus</keyword>
<keyword id="KW-0945">Host-virus interaction</keyword>
<keyword id="KW-0479">Metal-binding</keyword>
<keyword id="KW-1185">Reference proteome</keyword>
<keyword id="KW-1140">T=1 icosahedral capsid protein</keyword>
<keyword id="KW-1163">Viral penetration into host nucleus</keyword>
<keyword id="KW-0946">Virion</keyword>
<keyword id="KW-1160">Virus entry into host cell</keyword>
<keyword id="KW-0862">Zinc</keyword>
<keyword id="KW-0863">Zinc-finger</keyword>
<comment type="function">
    <text>Encapsidates the viral DNA into characteristic twinned ('geminate') particles. Binds the genomic viral ssDNA and shuttles it into and out of the cell nucleus. The CP of bipartite geminiviruses is not required for cell-to-cell or systemic movement.</text>
</comment>
<comment type="subunit">
    <text evidence="1">Homomultimer. Binds to single-stranded and double-stranded viral DNA. Interacts (via nuclear localization signals) with host importin alpha-1a (By similarity).</text>
</comment>
<comment type="subcellular location">
    <subcellularLocation>
        <location evidence="4">Virion</location>
    </subcellularLocation>
    <subcellularLocation>
        <location evidence="3">Host nucleus</location>
    </subcellularLocation>
    <text evidence="1">It is actively transported into the host cell nucleus. It may be exported out of the nucleus through a nuclear export signal for cell-to-cell movement and spread (By similarity).</text>
</comment>
<comment type="similarity">
    <text evidence="4">Belongs to the geminiviridae capsid protein family.</text>
</comment>
<organism>
    <name type="scientific">Mungbean yellow mosaic virus (strain Vigna)</name>
    <name type="common">MYMV</name>
    <dbReference type="NCBI Taxonomy" id="223295"/>
    <lineage>
        <taxon>Viruses</taxon>
        <taxon>Monodnaviria</taxon>
        <taxon>Shotokuvirae</taxon>
        <taxon>Cressdnaviricota</taxon>
        <taxon>Repensiviricetes</taxon>
        <taxon>Geplafuvirales</taxon>
        <taxon>Geminiviridae</taxon>
        <taxon>Begomovirus</taxon>
        <taxon>Mungbean yellow mosaic virus</taxon>
    </lineage>
</organism>
<sequence>MPKRNYDTAFSTPMSNVRRRLTFDTPLSLPATAGSVPASAKRRRWTNRPMWRKPRYYRLYRSPDVPRGCEGPCKVQSFEAKHDISHVGKVICVTDVTRGMGITHRVGKRFCVKSIWVTGKIWMDENIKTKNHTNTVMFKLVRDRRPFGTPQDFGQVFNMYDNEPSTATVKNDLRDRYQVVRKFQATVTGGQYASKEQAIVSKFYRVNNYVVYNHQEAAKYENHTENALLLYMACTHASNPVYATLKIRIYFYDSISN</sequence>
<gene>
    <name type="ORF">AR1</name>
    <name type="ORF">AV1</name>
</gene>
<reference key="1">
    <citation type="journal article" date="2004" name="Arch. Virol.">
        <title>Analysis of an isolate of Mungbean yellow mosaic virus (MYMV) with a highly variable DNA B component.</title>
        <authorList>
            <person name="Karthikeyan A.S."/>
            <person name="Vanitharani R."/>
            <person name="Balaji V."/>
            <person name="Anuradha S."/>
            <person name="Thillaichidambaram P."/>
            <person name="Shivaprasad P.V."/>
            <person name="Parameswari C."/>
            <person name="Balamani V."/>
            <person name="Saminathan M."/>
            <person name="Veluthambi K."/>
        </authorList>
    </citation>
    <scope>NUCLEOTIDE SEQUENCE [GENOMIC DNA]</scope>
</reference>
<reference key="2">
    <citation type="journal article" date="2005" name="J. Gen. Virol.">
        <title>Coat proteins of Rice tungro bacilliform virus and Mungbean yellow mosaic virus contain multiple nuclear-localization signals and interact with importin alpha.</title>
        <authorList>
            <person name="Guerra-Peraza O."/>
            <person name="Kirk D."/>
            <person name="Seltzer V."/>
            <person name="Veluthambi K."/>
            <person name="Schmit A.C."/>
            <person name="Hohn T."/>
            <person name="Herzog E."/>
        </authorList>
    </citation>
    <scope>SUBCELLULAR LOCATION</scope>
    <scope>NUCLEAR LOCALIZATION SIGNAL</scope>
    <scope>INTERACTION WITH ORYZA SATIVA IMPORTIN ALPHA-1A</scope>
</reference>
<name>CAPSD_MYMVV</name>
<feature type="chain" id="PRO_0000320108" description="Capsid protein">
    <location>
        <begin position="1"/>
        <end position="257"/>
    </location>
</feature>
<feature type="zinc finger region" evidence="2">
    <location>
        <begin position="69"/>
        <end position="86"/>
    </location>
</feature>
<feature type="short sequence motif" description="Bipartite nuclear localization signal" evidence="2">
    <location>
        <begin position="3"/>
        <end position="20"/>
    </location>
</feature>
<feature type="short sequence motif" description="Nuclear localization signal" evidence="2">
    <location>
        <begin position="41"/>
        <end position="55"/>
    </location>
</feature>
<feature type="short sequence motif" description="Nuclear export signal" evidence="2">
    <location>
        <begin position="102"/>
        <end position="123"/>
    </location>
</feature>
<feature type="short sequence motif" description="Bipartite nuclear localization signal" evidence="2">
    <location>
        <begin position="201"/>
        <end position="248"/>
    </location>
</feature>
<evidence type="ECO:0000250" key="1"/>
<evidence type="ECO:0000255" key="2"/>
<evidence type="ECO:0000269" key="3">
    <source>
    </source>
</evidence>
<evidence type="ECO:0000305" key="4"/>